<comment type="function">
    <text evidence="1">Required for rescue of stalled ribosomes mediated by trans-translation. Binds to transfer-messenger RNA (tmRNA), required for stable association of tmRNA with ribosomes. tmRNA and SmpB together mimic tRNA shape, replacing the anticodon stem-loop with SmpB. tmRNA is encoded by the ssrA gene; the 2 termini fold to resemble tRNA(Ala) and it encodes a 'tag peptide', a short internal open reading frame. During trans-translation Ala-aminoacylated tmRNA acts like a tRNA, entering the A-site of stalled ribosomes, displacing the stalled mRNA. The ribosome then switches to translate the ORF on the tmRNA; the nascent peptide is terminated with the 'tag peptide' encoded by the tmRNA and targeted for degradation. The ribosome is freed to recommence translation, which seems to be the essential function of trans-translation.</text>
</comment>
<comment type="subcellular location">
    <subcellularLocation>
        <location evidence="1">Cytoplasm</location>
    </subcellularLocation>
    <text evidence="1">The tmRNA-SmpB complex associates with stalled 70S ribosomes.</text>
</comment>
<comment type="similarity">
    <text evidence="1">Belongs to the SmpB family.</text>
</comment>
<evidence type="ECO:0000255" key="1">
    <source>
        <dbReference type="HAMAP-Rule" id="MF_00023"/>
    </source>
</evidence>
<name>SSRP_RICRO</name>
<accession>B0BXJ2</accession>
<proteinExistence type="inferred from homology"/>
<keyword id="KW-0963">Cytoplasm</keyword>
<keyword id="KW-0694">RNA-binding</keyword>
<reference key="1">
    <citation type="journal article" date="2008" name="Infect. Immun.">
        <title>Genomic comparison of virulent Rickettsia rickettsii Sheila Smith and avirulent Rickettsia rickettsii Iowa.</title>
        <authorList>
            <person name="Ellison D.W."/>
            <person name="Clark T.R."/>
            <person name="Sturdevant D.E."/>
            <person name="Virtaneva K."/>
            <person name="Porcella S.F."/>
            <person name="Hackstadt T."/>
        </authorList>
    </citation>
    <scope>NUCLEOTIDE SEQUENCE [LARGE SCALE GENOMIC DNA]</scope>
    <source>
        <strain>Iowa</strain>
    </source>
</reference>
<dbReference type="EMBL" id="CP000766">
    <property type="protein sequence ID" value="ABY72568.1"/>
    <property type="molecule type" value="Genomic_DNA"/>
</dbReference>
<dbReference type="RefSeq" id="WP_012150787.1">
    <property type="nucleotide sequence ID" value="NC_010263.3"/>
</dbReference>
<dbReference type="SMR" id="B0BXJ2"/>
<dbReference type="GeneID" id="79937340"/>
<dbReference type="KEGG" id="rrj:RrIowa_0710"/>
<dbReference type="eggNOG" id="COG0691">
    <property type="taxonomic scope" value="Bacteria"/>
</dbReference>
<dbReference type="HOGENOM" id="CLU_108953_0_1_5"/>
<dbReference type="Proteomes" id="UP000000796">
    <property type="component" value="Chromosome"/>
</dbReference>
<dbReference type="GO" id="GO:0005829">
    <property type="term" value="C:cytosol"/>
    <property type="evidence" value="ECO:0007669"/>
    <property type="project" value="TreeGrafter"/>
</dbReference>
<dbReference type="GO" id="GO:0003723">
    <property type="term" value="F:RNA binding"/>
    <property type="evidence" value="ECO:0007669"/>
    <property type="project" value="UniProtKB-UniRule"/>
</dbReference>
<dbReference type="GO" id="GO:0070929">
    <property type="term" value="P:trans-translation"/>
    <property type="evidence" value="ECO:0007669"/>
    <property type="project" value="UniProtKB-UniRule"/>
</dbReference>
<dbReference type="CDD" id="cd09294">
    <property type="entry name" value="SmpB"/>
    <property type="match status" value="1"/>
</dbReference>
<dbReference type="Gene3D" id="2.40.280.10">
    <property type="match status" value="1"/>
</dbReference>
<dbReference type="HAMAP" id="MF_00023">
    <property type="entry name" value="SmpB"/>
    <property type="match status" value="1"/>
</dbReference>
<dbReference type="InterPro" id="IPR023620">
    <property type="entry name" value="SmpB"/>
</dbReference>
<dbReference type="InterPro" id="IPR000037">
    <property type="entry name" value="SsrA-bd_prot"/>
</dbReference>
<dbReference type="NCBIfam" id="NF003843">
    <property type="entry name" value="PRK05422.1"/>
    <property type="match status" value="1"/>
</dbReference>
<dbReference type="NCBIfam" id="TIGR00086">
    <property type="entry name" value="smpB"/>
    <property type="match status" value="1"/>
</dbReference>
<dbReference type="PANTHER" id="PTHR30308:SF2">
    <property type="entry name" value="SSRA-BINDING PROTEIN"/>
    <property type="match status" value="1"/>
</dbReference>
<dbReference type="PANTHER" id="PTHR30308">
    <property type="entry name" value="TMRNA-BINDING COMPONENT OF TRANS-TRANSLATION TAGGING COMPLEX"/>
    <property type="match status" value="1"/>
</dbReference>
<dbReference type="Pfam" id="PF01668">
    <property type="entry name" value="SmpB"/>
    <property type="match status" value="1"/>
</dbReference>
<dbReference type="SUPFAM" id="SSF74982">
    <property type="entry name" value="Small protein B (SmpB)"/>
    <property type="match status" value="1"/>
</dbReference>
<organism>
    <name type="scientific">Rickettsia rickettsii (strain Iowa)</name>
    <dbReference type="NCBI Taxonomy" id="452659"/>
    <lineage>
        <taxon>Bacteria</taxon>
        <taxon>Pseudomonadati</taxon>
        <taxon>Pseudomonadota</taxon>
        <taxon>Alphaproteobacteria</taxon>
        <taxon>Rickettsiales</taxon>
        <taxon>Rickettsiaceae</taxon>
        <taxon>Rickettsieae</taxon>
        <taxon>Rickettsia</taxon>
        <taxon>spotted fever group</taxon>
    </lineage>
</organism>
<protein>
    <recommendedName>
        <fullName evidence="1">SsrA-binding protein</fullName>
    </recommendedName>
    <alternativeName>
        <fullName evidence="1">Small protein B</fullName>
    </alternativeName>
</protein>
<feature type="chain" id="PRO_1000074365" description="SsrA-binding protein">
    <location>
        <begin position="1"/>
        <end position="152"/>
    </location>
</feature>
<sequence length="152" mass="17903">MTEYKKVIAQNKKALFHYFIEERLEAGIVLKGSEVRSLRQGKASIEESHAADTGHEVFLYNCHIAEYEKANRFNHATRRPRKLLLHTKEIKKIIGRIRIKGYTLVALSMYFNKKNKVKVELGIAKGKKLHDKRESIKEKDWKRDQSRLIRQK</sequence>
<gene>
    <name evidence="1" type="primary">smpB</name>
    <name type="ordered locus">RrIowa_0710</name>
</gene>